<dbReference type="EMBL" id="CP000431">
    <property type="protein sequence ID" value="ABG98308.1"/>
    <property type="molecule type" value="Genomic_DNA"/>
</dbReference>
<dbReference type="RefSeq" id="WP_005240477.1">
    <property type="nucleotide sequence ID" value="NC_008268.1"/>
</dbReference>
<dbReference type="SMR" id="Q0S2C8"/>
<dbReference type="GeneID" id="69890927"/>
<dbReference type="KEGG" id="rha:RHA1_ro06535"/>
<dbReference type="eggNOG" id="COG0228">
    <property type="taxonomic scope" value="Bacteria"/>
</dbReference>
<dbReference type="HOGENOM" id="CLU_100590_1_1_11"/>
<dbReference type="OrthoDB" id="9807878at2"/>
<dbReference type="Proteomes" id="UP000008710">
    <property type="component" value="Chromosome"/>
</dbReference>
<dbReference type="GO" id="GO:0005737">
    <property type="term" value="C:cytoplasm"/>
    <property type="evidence" value="ECO:0007669"/>
    <property type="project" value="UniProtKB-ARBA"/>
</dbReference>
<dbReference type="GO" id="GO:0015935">
    <property type="term" value="C:small ribosomal subunit"/>
    <property type="evidence" value="ECO:0007669"/>
    <property type="project" value="TreeGrafter"/>
</dbReference>
<dbReference type="GO" id="GO:0003735">
    <property type="term" value="F:structural constituent of ribosome"/>
    <property type="evidence" value="ECO:0007669"/>
    <property type="project" value="InterPro"/>
</dbReference>
<dbReference type="GO" id="GO:0006412">
    <property type="term" value="P:translation"/>
    <property type="evidence" value="ECO:0007669"/>
    <property type="project" value="UniProtKB-UniRule"/>
</dbReference>
<dbReference type="Gene3D" id="3.30.1320.10">
    <property type="match status" value="1"/>
</dbReference>
<dbReference type="HAMAP" id="MF_00385">
    <property type="entry name" value="Ribosomal_bS16"/>
    <property type="match status" value="1"/>
</dbReference>
<dbReference type="InterPro" id="IPR000307">
    <property type="entry name" value="Ribosomal_bS16"/>
</dbReference>
<dbReference type="InterPro" id="IPR020592">
    <property type="entry name" value="Ribosomal_bS16_CS"/>
</dbReference>
<dbReference type="InterPro" id="IPR023803">
    <property type="entry name" value="Ribosomal_bS16_dom_sf"/>
</dbReference>
<dbReference type="NCBIfam" id="NF011093">
    <property type="entry name" value="PRK14520.1"/>
    <property type="match status" value="1"/>
</dbReference>
<dbReference type="NCBIfam" id="TIGR00002">
    <property type="entry name" value="S16"/>
    <property type="match status" value="1"/>
</dbReference>
<dbReference type="PANTHER" id="PTHR12919">
    <property type="entry name" value="30S RIBOSOMAL PROTEIN S16"/>
    <property type="match status" value="1"/>
</dbReference>
<dbReference type="PANTHER" id="PTHR12919:SF20">
    <property type="entry name" value="SMALL RIBOSOMAL SUBUNIT PROTEIN BS16M"/>
    <property type="match status" value="1"/>
</dbReference>
<dbReference type="Pfam" id="PF00886">
    <property type="entry name" value="Ribosomal_S16"/>
    <property type="match status" value="1"/>
</dbReference>
<dbReference type="SUPFAM" id="SSF54565">
    <property type="entry name" value="Ribosomal protein S16"/>
    <property type="match status" value="1"/>
</dbReference>
<dbReference type="PROSITE" id="PS00732">
    <property type="entry name" value="RIBOSOMAL_S16"/>
    <property type="match status" value="1"/>
</dbReference>
<protein>
    <recommendedName>
        <fullName evidence="1">Small ribosomal subunit protein bS16</fullName>
    </recommendedName>
    <alternativeName>
        <fullName evidence="3">30S ribosomal protein S16</fullName>
    </alternativeName>
</protein>
<reference key="1">
    <citation type="journal article" date="2006" name="Proc. Natl. Acad. Sci. U.S.A.">
        <title>The complete genome of Rhodococcus sp. RHA1 provides insights into a catabolic powerhouse.</title>
        <authorList>
            <person name="McLeod M.P."/>
            <person name="Warren R.L."/>
            <person name="Hsiao W.W.L."/>
            <person name="Araki N."/>
            <person name="Myhre M."/>
            <person name="Fernandes C."/>
            <person name="Miyazawa D."/>
            <person name="Wong W."/>
            <person name="Lillquist A.L."/>
            <person name="Wang D."/>
            <person name="Dosanjh M."/>
            <person name="Hara H."/>
            <person name="Petrescu A."/>
            <person name="Morin R.D."/>
            <person name="Yang G."/>
            <person name="Stott J.M."/>
            <person name="Schein J.E."/>
            <person name="Shin H."/>
            <person name="Smailus D."/>
            <person name="Siddiqui A.S."/>
            <person name="Marra M.A."/>
            <person name="Jones S.J.M."/>
            <person name="Holt R."/>
            <person name="Brinkman F.S.L."/>
            <person name="Miyauchi K."/>
            <person name="Fukuda M."/>
            <person name="Davies J.E."/>
            <person name="Mohn W.W."/>
            <person name="Eltis L.D."/>
        </authorList>
    </citation>
    <scope>NUCLEOTIDE SEQUENCE [LARGE SCALE GENOMIC DNA]</scope>
    <source>
        <strain>RHA1</strain>
    </source>
</reference>
<comment type="similarity">
    <text evidence="1">Belongs to the bacterial ribosomal protein bS16 family.</text>
</comment>
<feature type="chain" id="PRO_1000049332" description="Small ribosomal subunit protein bS16">
    <location>
        <begin position="1"/>
        <end position="153"/>
    </location>
</feature>
<feature type="region of interest" description="Disordered" evidence="2">
    <location>
        <begin position="114"/>
        <end position="153"/>
    </location>
</feature>
<feature type="compositionally biased region" description="Low complexity" evidence="2">
    <location>
        <begin position="137"/>
        <end position="153"/>
    </location>
</feature>
<gene>
    <name evidence="1" type="primary">rpsP</name>
    <name type="ordered locus">RHA1_ro06535</name>
</gene>
<accession>Q0S2C8</accession>
<organism>
    <name type="scientific">Rhodococcus jostii (strain RHA1)</name>
    <dbReference type="NCBI Taxonomy" id="101510"/>
    <lineage>
        <taxon>Bacteria</taxon>
        <taxon>Bacillati</taxon>
        <taxon>Actinomycetota</taxon>
        <taxon>Actinomycetes</taxon>
        <taxon>Mycobacteriales</taxon>
        <taxon>Nocardiaceae</taxon>
        <taxon>Rhodococcus</taxon>
    </lineage>
</organism>
<keyword id="KW-0687">Ribonucleoprotein</keyword>
<keyword id="KW-0689">Ribosomal protein</keyword>
<name>RS16_RHOJR</name>
<proteinExistence type="inferred from homology"/>
<sequence length="153" mass="16629">MAVKIKLTRLGKIRNPQYRIVVADSRTRRNGRAIETIGKYHPKEEPSLIEVDSERAQYWLGVGAQPTEPVEAILKITGDWQKFKGLPGAEGTLRVKEAKPSKLELFQAALAQAENEPVGEAITPKKKKAKAEDAEAAADAPAEAAAESEAADK</sequence>
<evidence type="ECO:0000255" key="1">
    <source>
        <dbReference type="HAMAP-Rule" id="MF_00385"/>
    </source>
</evidence>
<evidence type="ECO:0000256" key="2">
    <source>
        <dbReference type="SAM" id="MobiDB-lite"/>
    </source>
</evidence>
<evidence type="ECO:0000305" key="3"/>